<evidence type="ECO:0000255" key="1">
    <source>
        <dbReference type="HAMAP-Rule" id="MF_01457"/>
    </source>
</evidence>
<evidence type="ECO:0000256" key="2">
    <source>
        <dbReference type="SAM" id="MobiDB-lite"/>
    </source>
</evidence>
<dbReference type="EMBL" id="CP001052">
    <property type="protein sequence ID" value="ACD18173.1"/>
    <property type="molecule type" value="Genomic_DNA"/>
</dbReference>
<dbReference type="RefSeq" id="WP_012434699.1">
    <property type="nucleotide sequence ID" value="NC_010681.1"/>
</dbReference>
<dbReference type="SMR" id="B2T792"/>
<dbReference type="STRING" id="398527.Bphyt_3785"/>
<dbReference type="KEGG" id="bpy:Bphyt_3785"/>
<dbReference type="eggNOG" id="COG5581">
    <property type="taxonomic scope" value="Bacteria"/>
</dbReference>
<dbReference type="HOGENOM" id="CLU_086025_0_0_4"/>
<dbReference type="OrthoDB" id="5572581at2"/>
<dbReference type="Proteomes" id="UP000001739">
    <property type="component" value="Chromosome 1"/>
</dbReference>
<dbReference type="GO" id="GO:0009425">
    <property type="term" value="C:bacterial-type flagellum basal body"/>
    <property type="evidence" value="ECO:0007669"/>
    <property type="project" value="UniProtKB-SubCell"/>
</dbReference>
<dbReference type="GO" id="GO:0035438">
    <property type="term" value="F:cyclic-di-GMP binding"/>
    <property type="evidence" value="ECO:0007669"/>
    <property type="project" value="UniProtKB-UniRule"/>
</dbReference>
<dbReference type="GO" id="GO:0071973">
    <property type="term" value="P:bacterial-type flagellum-dependent cell motility"/>
    <property type="evidence" value="ECO:0007669"/>
    <property type="project" value="UniProtKB-UniRule"/>
</dbReference>
<dbReference type="GO" id="GO:0071945">
    <property type="term" value="P:regulation of bacterial-type flagellum-dependent cell motility by regulation of motor speed"/>
    <property type="evidence" value="ECO:0007669"/>
    <property type="project" value="UniProtKB-UniRule"/>
</dbReference>
<dbReference type="Gene3D" id="2.30.110.10">
    <property type="entry name" value="Electron Transport, Fmn-binding Protein, Chain A"/>
    <property type="match status" value="1"/>
</dbReference>
<dbReference type="Gene3D" id="2.40.10.220">
    <property type="entry name" value="predicted glycosyltransferase like domains"/>
    <property type="match status" value="1"/>
</dbReference>
<dbReference type="HAMAP" id="MF_01457">
    <property type="entry name" value="YcgR"/>
    <property type="match status" value="1"/>
</dbReference>
<dbReference type="InterPro" id="IPR009875">
    <property type="entry name" value="PilZ_domain"/>
</dbReference>
<dbReference type="InterPro" id="IPR012349">
    <property type="entry name" value="Split_barrel_FMN-bd"/>
</dbReference>
<dbReference type="InterPro" id="IPR023787">
    <property type="entry name" value="T3SS_YcgR"/>
</dbReference>
<dbReference type="InterPro" id="IPR009926">
    <property type="entry name" value="T3SS_YcgR_PilZN"/>
</dbReference>
<dbReference type="Pfam" id="PF07238">
    <property type="entry name" value="PilZ"/>
    <property type="match status" value="1"/>
</dbReference>
<dbReference type="Pfam" id="PF07317">
    <property type="entry name" value="PilZN"/>
    <property type="match status" value="1"/>
</dbReference>
<proteinExistence type="inferred from homology"/>
<protein>
    <recommendedName>
        <fullName evidence="1">Flagellar brake protein YcgR 1</fullName>
    </recommendedName>
    <alternativeName>
        <fullName evidence="1">Cyclic di-GMP binding protein YcgR 1</fullName>
    </alternativeName>
</protein>
<sequence length="257" mass="28787">MDTTQSNGQTDTQGQLHAQTAEGGNDFGRRNPLEIGVQLRNLVNRGDFLTVQYAGGQLVTRLLEVDVRGRTFTFDWGALSDQNRGLLGAPRCQFHAQPDGVRVEFATATPRETRFEGLPAFEADFPEVLFYVQRREYFRVDAPILDPYVCSGRLPEGDTFRFEVHDLSLGGVGMRTADERVAELPMGTRLLDCELVLGALGRLSLDLQLVSHRSTALPNGTQRYQLGFRFLTLPGSAENTLQRLITQLEMKRRSLVR</sequence>
<reference key="1">
    <citation type="journal article" date="2011" name="J. Bacteriol.">
        <title>Complete genome sequence of the plant growth-promoting endophyte Burkholderia phytofirmans strain PsJN.</title>
        <authorList>
            <person name="Weilharter A."/>
            <person name="Mitter B."/>
            <person name="Shin M.V."/>
            <person name="Chain P.S."/>
            <person name="Nowak J."/>
            <person name="Sessitsch A."/>
        </authorList>
    </citation>
    <scope>NUCLEOTIDE SEQUENCE [LARGE SCALE GENOMIC DNA]</scope>
    <source>
        <strain>DSM 17436 / LMG 22146 / PsJN</strain>
    </source>
</reference>
<comment type="function">
    <text evidence="1">Acts as a flagellar brake, regulating swimming and swarming in a bis-(3'-5') cyclic diguanylic acid (c-di-GMP)-dependent manner. Binds 1 c-di-GMP dimer per subunit. Increasing levels of c-di-GMP lead to decreased motility.</text>
</comment>
<comment type="subunit">
    <text evidence="1">Monomer. Interacts with the flagellar basal bodies.</text>
</comment>
<comment type="subcellular location">
    <subcellularLocation>
        <location evidence="1">Bacterial flagellum basal body</location>
    </subcellularLocation>
</comment>
<comment type="similarity">
    <text evidence="1">Belongs to the YcgR family.</text>
</comment>
<organism>
    <name type="scientific">Paraburkholderia phytofirmans (strain DSM 17436 / LMG 22146 / PsJN)</name>
    <name type="common">Burkholderia phytofirmans</name>
    <dbReference type="NCBI Taxonomy" id="398527"/>
    <lineage>
        <taxon>Bacteria</taxon>
        <taxon>Pseudomonadati</taxon>
        <taxon>Pseudomonadota</taxon>
        <taxon>Betaproteobacteria</taxon>
        <taxon>Burkholderiales</taxon>
        <taxon>Burkholderiaceae</taxon>
        <taxon>Paraburkholderia</taxon>
    </lineage>
</organism>
<accession>B2T792</accession>
<feature type="chain" id="PRO_0000395267" description="Flagellar brake protein YcgR 1">
    <location>
        <begin position="1"/>
        <end position="257"/>
    </location>
</feature>
<feature type="domain" description="PilZ" evidence="1">
    <location>
        <begin position="133"/>
        <end position="246"/>
    </location>
</feature>
<feature type="region of interest" description="Disordered" evidence="2">
    <location>
        <begin position="1"/>
        <end position="30"/>
    </location>
</feature>
<feature type="compositionally biased region" description="Polar residues" evidence="2">
    <location>
        <begin position="1"/>
        <end position="18"/>
    </location>
</feature>
<keyword id="KW-0975">Bacterial flagellum</keyword>
<keyword id="KW-0973">c-di-GMP</keyword>
<keyword id="KW-0547">Nucleotide-binding</keyword>
<gene>
    <name evidence="1" type="primary">ycgR1</name>
    <name type="ordered locus">Bphyt_3785</name>
</gene>
<name>YCGR1_PARPJ</name>